<evidence type="ECO:0000250" key="1"/>
<evidence type="ECO:0000255" key="2">
    <source>
        <dbReference type="PROSITE-ProRule" id="PRU00274"/>
    </source>
</evidence>
<evidence type="ECO:0000269" key="3">
    <source>
    </source>
</evidence>
<comment type="catalytic activity">
    <reaction>
        <text>Preferential cleavage: Arg-|-Xaa, Lys-|-Xaa.</text>
        <dbReference type="EC" id="3.4.21.4"/>
    </reaction>
</comment>
<comment type="cofactor">
    <cofactor evidence="1">
        <name>Ca(2+)</name>
        <dbReference type="ChEBI" id="CHEBI:29108"/>
    </cofactor>
    <text evidence="1">Binds 1 Ca(2+) ion per subunit.</text>
</comment>
<comment type="subcellular location">
    <subcellularLocation>
        <location>Secreted</location>
        <location>Extracellular space</location>
    </subcellularLocation>
</comment>
<comment type="similarity">
    <text evidence="2">Belongs to the peptidase S1 family.</text>
</comment>
<dbReference type="EC" id="3.4.21.4"/>
<dbReference type="PIR" id="A00950">
    <property type="entry name" value="TRDFS"/>
</dbReference>
<dbReference type="SMR" id="P00764"/>
<dbReference type="GO" id="GO:0005615">
    <property type="term" value="C:extracellular space"/>
    <property type="evidence" value="ECO:0007669"/>
    <property type="project" value="TreeGrafter"/>
</dbReference>
<dbReference type="GO" id="GO:0046872">
    <property type="term" value="F:metal ion binding"/>
    <property type="evidence" value="ECO:0007669"/>
    <property type="project" value="UniProtKB-KW"/>
</dbReference>
<dbReference type="GO" id="GO:0004252">
    <property type="term" value="F:serine-type endopeptidase activity"/>
    <property type="evidence" value="ECO:0007669"/>
    <property type="project" value="UniProtKB-EC"/>
</dbReference>
<dbReference type="GO" id="GO:0007586">
    <property type="term" value="P:digestion"/>
    <property type="evidence" value="ECO:0007669"/>
    <property type="project" value="UniProtKB-KW"/>
</dbReference>
<dbReference type="GO" id="GO:0006508">
    <property type="term" value="P:proteolysis"/>
    <property type="evidence" value="ECO:0007669"/>
    <property type="project" value="UniProtKB-KW"/>
</dbReference>
<dbReference type="CDD" id="cd00190">
    <property type="entry name" value="Tryp_SPc"/>
    <property type="match status" value="1"/>
</dbReference>
<dbReference type="FunFam" id="2.40.10.10:FF:000008">
    <property type="entry name" value="Cationic trypsin"/>
    <property type="match status" value="1"/>
</dbReference>
<dbReference type="FunFam" id="2.40.10.10:FF:000005">
    <property type="entry name" value="Serine protease 37"/>
    <property type="match status" value="1"/>
</dbReference>
<dbReference type="Gene3D" id="2.40.10.10">
    <property type="entry name" value="Trypsin-like serine proteases"/>
    <property type="match status" value="2"/>
</dbReference>
<dbReference type="InterPro" id="IPR009003">
    <property type="entry name" value="Peptidase_S1_PA"/>
</dbReference>
<dbReference type="InterPro" id="IPR043504">
    <property type="entry name" value="Peptidase_S1_PA_chymotrypsin"/>
</dbReference>
<dbReference type="InterPro" id="IPR001314">
    <property type="entry name" value="Peptidase_S1A"/>
</dbReference>
<dbReference type="InterPro" id="IPR050127">
    <property type="entry name" value="Serine_Proteases_S1"/>
</dbReference>
<dbReference type="InterPro" id="IPR001254">
    <property type="entry name" value="Trypsin_dom"/>
</dbReference>
<dbReference type="InterPro" id="IPR018114">
    <property type="entry name" value="TRYPSIN_HIS"/>
</dbReference>
<dbReference type="InterPro" id="IPR033116">
    <property type="entry name" value="TRYPSIN_SER"/>
</dbReference>
<dbReference type="PANTHER" id="PTHR24264:SF15">
    <property type="entry name" value="RIKEN CDNA 2210010C04 GENE"/>
    <property type="match status" value="1"/>
</dbReference>
<dbReference type="PANTHER" id="PTHR24264">
    <property type="entry name" value="TRYPSIN-RELATED"/>
    <property type="match status" value="1"/>
</dbReference>
<dbReference type="Pfam" id="PF00089">
    <property type="entry name" value="Trypsin"/>
    <property type="match status" value="1"/>
</dbReference>
<dbReference type="PRINTS" id="PR00722">
    <property type="entry name" value="CHYMOTRYPSIN"/>
</dbReference>
<dbReference type="SMART" id="SM00020">
    <property type="entry name" value="Tryp_SPc"/>
    <property type="match status" value="1"/>
</dbReference>
<dbReference type="SUPFAM" id="SSF50494">
    <property type="entry name" value="Trypsin-like serine proteases"/>
    <property type="match status" value="1"/>
</dbReference>
<dbReference type="PROSITE" id="PS50240">
    <property type="entry name" value="TRYPSIN_DOM"/>
    <property type="match status" value="1"/>
</dbReference>
<dbReference type="PROSITE" id="PS00134">
    <property type="entry name" value="TRYPSIN_HIS"/>
    <property type="match status" value="1"/>
</dbReference>
<dbReference type="PROSITE" id="PS00135">
    <property type="entry name" value="TRYPSIN_SER"/>
    <property type="match status" value="1"/>
</dbReference>
<feature type="propeptide" id="PRO_0000028231" description="Activation peptide" evidence="3">
    <location>
        <begin position="1"/>
        <end position="7"/>
    </location>
</feature>
<feature type="chain" id="PRO_0000028232" description="Trypsin">
    <location>
        <begin position="8"/>
        <end position="229"/>
    </location>
</feature>
<feature type="domain" description="Peptidase S1" evidence="2">
    <location>
        <begin position="8"/>
        <end position="227"/>
    </location>
</feature>
<feature type="active site" description="Charge relay system" evidence="1">
    <location>
        <position position="47"/>
    </location>
</feature>
<feature type="active site" description="Charge relay system" evidence="1">
    <location>
        <position position="91"/>
    </location>
</feature>
<feature type="active site" description="Charge relay system" evidence="1">
    <location>
        <position position="183"/>
    </location>
</feature>
<feature type="binding site" evidence="1">
    <location>
        <position position="59"/>
    </location>
    <ligand>
        <name>Ca(2+)</name>
        <dbReference type="ChEBI" id="CHEBI:29108"/>
    </ligand>
</feature>
<feature type="binding site" evidence="1">
    <location>
        <position position="69"/>
    </location>
    <ligand>
        <name>Ca(2+)</name>
        <dbReference type="ChEBI" id="CHEBI:29108"/>
    </ligand>
</feature>
<feature type="site" description="Required for specificity" evidence="1">
    <location>
        <position position="177"/>
    </location>
</feature>
<feature type="disulfide bond" evidence="2">
    <location>
        <begin position="14"/>
        <end position="143"/>
    </location>
</feature>
<feature type="disulfide bond" evidence="2">
    <location>
        <begin position="32"/>
        <end position="48"/>
    </location>
</feature>
<feature type="disulfide bond" evidence="2">
    <location>
        <begin position="116"/>
        <end position="216"/>
    </location>
</feature>
<feature type="disulfide bond" evidence="2">
    <location>
        <begin position="123"/>
        <end position="189"/>
    </location>
</feature>
<feature type="disulfide bond" evidence="2">
    <location>
        <begin position="154"/>
        <end position="168"/>
    </location>
</feature>
<feature type="disulfide bond" evidence="2">
    <location>
        <begin position="179"/>
        <end position="203"/>
    </location>
</feature>
<feature type="sequence variant">
    <original>L</original>
    <variation>P</variation>
    <location>
        <position position="109"/>
    </location>
</feature>
<organism>
    <name type="scientific">Squalus acanthias</name>
    <name type="common">Spiny dogfish</name>
    <dbReference type="NCBI Taxonomy" id="7797"/>
    <lineage>
        <taxon>Eukaryota</taxon>
        <taxon>Metazoa</taxon>
        <taxon>Chordata</taxon>
        <taxon>Craniata</taxon>
        <taxon>Vertebrata</taxon>
        <taxon>Chondrichthyes</taxon>
        <taxon>Elasmobranchii</taxon>
        <taxon>Squalomorphii</taxon>
        <taxon>Squaliformes</taxon>
        <taxon>Squalidae</taxon>
        <taxon>Squalus</taxon>
    </lineage>
</organism>
<name>TRYP_SQUAC</name>
<reference key="1">
    <citation type="journal article" date="1975" name="Biochemistry">
        <title>Amino acid sequence of dogfish trypsin.</title>
        <authorList>
            <person name="Titani K."/>
            <person name="Ericsson L.H."/>
            <person name="Neurath H."/>
            <person name="Walsh K.A."/>
        </authorList>
    </citation>
    <scope>PROTEIN SEQUENCE OF 8-229</scope>
</reference>
<reference key="2">
    <citation type="journal article" date="1971" name="FEBS Lett.">
        <title>Comparison of the amino terminal sequences of bovine, dogfish, and lungfish trypsinogens.</title>
        <authorList>
            <person name="Hermodson M.A."/>
            <person name="Tye R.W."/>
            <person name="Reeck G.R."/>
            <person name="Neurath H."/>
            <person name="Walsh K.A."/>
        </authorList>
    </citation>
    <scope>PROTEIN SEQUENCE OF 1-21</scope>
</reference>
<keyword id="KW-0106">Calcium</keyword>
<keyword id="KW-0222">Digestion</keyword>
<keyword id="KW-0903">Direct protein sequencing</keyword>
<keyword id="KW-1015">Disulfide bond</keyword>
<keyword id="KW-0378">Hydrolase</keyword>
<keyword id="KW-0479">Metal-binding</keyword>
<keyword id="KW-0645">Protease</keyword>
<keyword id="KW-0964">Secreted</keyword>
<keyword id="KW-0720">Serine protease</keyword>
<keyword id="KW-0865">Zymogen</keyword>
<protein>
    <recommendedName>
        <fullName>Trypsin</fullName>
        <ecNumber>3.4.21.4</ecNumber>
    </recommendedName>
</protein>
<proteinExistence type="evidence at protein level"/>
<accession>P00764</accession>
<sequence length="229" mass="24591">APDDDDKIVGGYECPKHAAPWTVSLNVGYHFCGGSLIAPGWVVSAAHCYQRRIQVRLGEHDISANEGDETYIDSSMVIRHPNYSGYDLDNDIMLIKLSKPAALNRNVDLISLPTGCAYAGEMCLISGWGNTMDGAVSGDQLQCLDAPVLSDAECKGAYPGMITNNMMCVGYMEGGKDSCQGDSGGPVVCNGMLQGIVSWGYGCAERDHPGVYTRVCHYVSWIHETIASV</sequence>